<reference key="1">
    <citation type="journal article" date="2004" name="Proc. Natl. Acad. Sci. U.S.A.">
        <title>Genome sequence of the enterobacterial phytopathogen Erwinia carotovora subsp. atroseptica and characterization of virulence factors.</title>
        <authorList>
            <person name="Bell K.S."/>
            <person name="Sebaihia M."/>
            <person name="Pritchard L."/>
            <person name="Holden M.T.G."/>
            <person name="Hyman L.J."/>
            <person name="Holeva M.C."/>
            <person name="Thomson N.R."/>
            <person name="Bentley S.D."/>
            <person name="Churcher L.J.C."/>
            <person name="Mungall K."/>
            <person name="Atkin R."/>
            <person name="Bason N."/>
            <person name="Brooks K."/>
            <person name="Chillingworth T."/>
            <person name="Clark K."/>
            <person name="Doggett J."/>
            <person name="Fraser A."/>
            <person name="Hance Z."/>
            <person name="Hauser H."/>
            <person name="Jagels K."/>
            <person name="Moule S."/>
            <person name="Norbertczak H."/>
            <person name="Ormond D."/>
            <person name="Price C."/>
            <person name="Quail M.A."/>
            <person name="Sanders M."/>
            <person name="Walker D."/>
            <person name="Whitehead S."/>
            <person name="Salmond G.P.C."/>
            <person name="Birch P.R.J."/>
            <person name="Parkhill J."/>
            <person name="Toth I.K."/>
        </authorList>
    </citation>
    <scope>NUCLEOTIDE SEQUENCE [LARGE SCALE GENOMIC DNA]</scope>
    <source>
        <strain>SCRI 1043 / ATCC BAA-672</strain>
    </source>
</reference>
<dbReference type="EC" id="1.1.1.85" evidence="1"/>
<dbReference type="EMBL" id="BX950851">
    <property type="protein sequence ID" value="CAG76730.1"/>
    <property type="molecule type" value="Genomic_DNA"/>
</dbReference>
<dbReference type="RefSeq" id="WP_011095330.1">
    <property type="nucleotide sequence ID" value="NC_004547.2"/>
</dbReference>
<dbReference type="SMR" id="Q6D0G7"/>
<dbReference type="STRING" id="218491.ECA3832"/>
<dbReference type="GeneID" id="45852232"/>
<dbReference type="KEGG" id="eca:ECA3832"/>
<dbReference type="eggNOG" id="COG0473">
    <property type="taxonomic scope" value="Bacteria"/>
</dbReference>
<dbReference type="HOGENOM" id="CLU_031953_0_3_6"/>
<dbReference type="OrthoDB" id="9767905at2"/>
<dbReference type="UniPathway" id="UPA00048">
    <property type="reaction ID" value="UER00072"/>
</dbReference>
<dbReference type="Proteomes" id="UP000007966">
    <property type="component" value="Chromosome"/>
</dbReference>
<dbReference type="GO" id="GO:0005829">
    <property type="term" value="C:cytosol"/>
    <property type="evidence" value="ECO:0007669"/>
    <property type="project" value="TreeGrafter"/>
</dbReference>
<dbReference type="GO" id="GO:0003862">
    <property type="term" value="F:3-isopropylmalate dehydrogenase activity"/>
    <property type="evidence" value="ECO:0007669"/>
    <property type="project" value="UniProtKB-UniRule"/>
</dbReference>
<dbReference type="GO" id="GO:0000287">
    <property type="term" value="F:magnesium ion binding"/>
    <property type="evidence" value="ECO:0007669"/>
    <property type="project" value="InterPro"/>
</dbReference>
<dbReference type="GO" id="GO:0051287">
    <property type="term" value="F:NAD binding"/>
    <property type="evidence" value="ECO:0007669"/>
    <property type="project" value="InterPro"/>
</dbReference>
<dbReference type="GO" id="GO:0009098">
    <property type="term" value="P:L-leucine biosynthetic process"/>
    <property type="evidence" value="ECO:0007669"/>
    <property type="project" value="UniProtKB-UniRule"/>
</dbReference>
<dbReference type="FunFam" id="3.40.718.10:FF:000004">
    <property type="entry name" value="3-isopropylmalate dehydrogenase"/>
    <property type="match status" value="1"/>
</dbReference>
<dbReference type="Gene3D" id="3.40.718.10">
    <property type="entry name" value="Isopropylmalate Dehydrogenase"/>
    <property type="match status" value="1"/>
</dbReference>
<dbReference type="HAMAP" id="MF_01033">
    <property type="entry name" value="LeuB_type1"/>
    <property type="match status" value="1"/>
</dbReference>
<dbReference type="InterPro" id="IPR019818">
    <property type="entry name" value="IsoCit/isopropylmalate_DH_CS"/>
</dbReference>
<dbReference type="InterPro" id="IPR024084">
    <property type="entry name" value="IsoPropMal-DH-like_dom"/>
</dbReference>
<dbReference type="InterPro" id="IPR004429">
    <property type="entry name" value="Isopropylmalate_DH"/>
</dbReference>
<dbReference type="NCBIfam" id="TIGR00169">
    <property type="entry name" value="leuB"/>
    <property type="match status" value="1"/>
</dbReference>
<dbReference type="PANTHER" id="PTHR42979">
    <property type="entry name" value="3-ISOPROPYLMALATE DEHYDROGENASE"/>
    <property type="match status" value="1"/>
</dbReference>
<dbReference type="PANTHER" id="PTHR42979:SF1">
    <property type="entry name" value="3-ISOPROPYLMALATE DEHYDROGENASE"/>
    <property type="match status" value="1"/>
</dbReference>
<dbReference type="Pfam" id="PF00180">
    <property type="entry name" value="Iso_dh"/>
    <property type="match status" value="1"/>
</dbReference>
<dbReference type="SMART" id="SM01329">
    <property type="entry name" value="Iso_dh"/>
    <property type="match status" value="1"/>
</dbReference>
<dbReference type="SUPFAM" id="SSF53659">
    <property type="entry name" value="Isocitrate/Isopropylmalate dehydrogenase-like"/>
    <property type="match status" value="1"/>
</dbReference>
<dbReference type="PROSITE" id="PS00470">
    <property type="entry name" value="IDH_IMDH"/>
    <property type="match status" value="1"/>
</dbReference>
<sequence length="363" mass="39202">MTKSYHIAVLPGDGIGPEVMAQAHKVLDAVRQRFGIRITTSEYDVGGIAIDRQGTPLPQATVAGCEQADAILFGSVGGPKWEHLPPAEQPERGALLPLRKHFKLFSNLRPARLYQGLEAFCPLRSDIAAKGFDILCVRELTGGIYFGQPKGREGSGQYERAFDTEVYHRFEIERIAHIAFESARKRRSIVTSIDKANVLQSSILWREIVTEVAKAYPDVKLSHLYIDNATMQLIKDPSQFDVMLCSNLFGDILSDECAMITGSMGMLPSASLNEQGFGLYEPAGGSAPDIAGKDIANPIAQILSLALLLRYSLGADDAAEAIEKAVNTALAEGYRTADLASASNAIGTSEMGDVIARFVAQGA</sequence>
<feature type="chain" id="PRO_0000083690" description="3-isopropylmalate dehydrogenase">
    <location>
        <begin position="1"/>
        <end position="363"/>
    </location>
</feature>
<feature type="binding site" evidence="1">
    <location>
        <begin position="78"/>
        <end position="91"/>
    </location>
    <ligand>
        <name>NAD(+)</name>
        <dbReference type="ChEBI" id="CHEBI:57540"/>
    </ligand>
</feature>
<feature type="binding site" evidence="1">
    <location>
        <position position="99"/>
    </location>
    <ligand>
        <name>substrate</name>
    </ligand>
</feature>
<feature type="binding site" evidence="1">
    <location>
        <position position="109"/>
    </location>
    <ligand>
        <name>substrate</name>
    </ligand>
</feature>
<feature type="binding site" evidence="1">
    <location>
        <position position="138"/>
    </location>
    <ligand>
        <name>substrate</name>
    </ligand>
</feature>
<feature type="binding site" evidence="1">
    <location>
        <position position="227"/>
    </location>
    <ligand>
        <name>Mg(2+)</name>
        <dbReference type="ChEBI" id="CHEBI:18420"/>
    </ligand>
</feature>
<feature type="binding site" evidence="1">
    <location>
        <position position="227"/>
    </location>
    <ligand>
        <name>substrate</name>
    </ligand>
</feature>
<feature type="binding site" evidence="1">
    <location>
        <position position="251"/>
    </location>
    <ligand>
        <name>Mg(2+)</name>
        <dbReference type="ChEBI" id="CHEBI:18420"/>
    </ligand>
</feature>
<feature type="binding site" evidence="1">
    <location>
        <position position="255"/>
    </location>
    <ligand>
        <name>Mg(2+)</name>
        <dbReference type="ChEBI" id="CHEBI:18420"/>
    </ligand>
</feature>
<feature type="binding site" evidence="1">
    <location>
        <begin position="285"/>
        <end position="297"/>
    </location>
    <ligand>
        <name>NAD(+)</name>
        <dbReference type="ChEBI" id="CHEBI:57540"/>
    </ligand>
</feature>
<feature type="site" description="Important for catalysis" evidence="1">
    <location>
        <position position="145"/>
    </location>
</feature>
<feature type="site" description="Important for catalysis" evidence="1">
    <location>
        <position position="195"/>
    </location>
</feature>
<accession>Q6D0G7</accession>
<protein>
    <recommendedName>
        <fullName evidence="1">3-isopropylmalate dehydrogenase</fullName>
        <ecNumber evidence="1">1.1.1.85</ecNumber>
    </recommendedName>
    <alternativeName>
        <fullName evidence="1">3-IPM-DH</fullName>
    </alternativeName>
    <alternativeName>
        <fullName evidence="1">Beta-IPM dehydrogenase</fullName>
        <shortName evidence="1">IMDH</shortName>
    </alternativeName>
</protein>
<proteinExistence type="inferred from homology"/>
<gene>
    <name evidence="1" type="primary">leuB</name>
    <name type="ordered locus">ECA3832</name>
</gene>
<evidence type="ECO:0000255" key="1">
    <source>
        <dbReference type="HAMAP-Rule" id="MF_01033"/>
    </source>
</evidence>
<keyword id="KW-0028">Amino-acid biosynthesis</keyword>
<keyword id="KW-0100">Branched-chain amino acid biosynthesis</keyword>
<keyword id="KW-0963">Cytoplasm</keyword>
<keyword id="KW-0432">Leucine biosynthesis</keyword>
<keyword id="KW-0460">Magnesium</keyword>
<keyword id="KW-0464">Manganese</keyword>
<keyword id="KW-0479">Metal-binding</keyword>
<keyword id="KW-0520">NAD</keyword>
<keyword id="KW-0560">Oxidoreductase</keyword>
<keyword id="KW-1185">Reference proteome</keyword>
<comment type="function">
    <text evidence="1">Catalyzes the oxidation of 3-carboxy-2-hydroxy-4-methylpentanoate (3-isopropylmalate) to 3-carboxy-4-methyl-2-oxopentanoate. The product decarboxylates to 4-methyl-2 oxopentanoate.</text>
</comment>
<comment type="catalytic activity">
    <reaction evidence="1">
        <text>(2R,3S)-3-isopropylmalate + NAD(+) = 4-methyl-2-oxopentanoate + CO2 + NADH</text>
        <dbReference type="Rhea" id="RHEA:32271"/>
        <dbReference type="ChEBI" id="CHEBI:16526"/>
        <dbReference type="ChEBI" id="CHEBI:17865"/>
        <dbReference type="ChEBI" id="CHEBI:35121"/>
        <dbReference type="ChEBI" id="CHEBI:57540"/>
        <dbReference type="ChEBI" id="CHEBI:57945"/>
        <dbReference type="EC" id="1.1.1.85"/>
    </reaction>
</comment>
<comment type="cofactor">
    <cofactor evidence="1">
        <name>Mg(2+)</name>
        <dbReference type="ChEBI" id="CHEBI:18420"/>
    </cofactor>
    <cofactor evidence="1">
        <name>Mn(2+)</name>
        <dbReference type="ChEBI" id="CHEBI:29035"/>
    </cofactor>
    <text evidence="1">Binds 1 Mg(2+) or Mn(2+) ion per subunit.</text>
</comment>
<comment type="pathway">
    <text evidence="1">Amino-acid biosynthesis; L-leucine biosynthesis; L-leucine from 3-methyl-2-oxobutanoate: step 3/4.</text>
</comment>
<comment type="subunit">
    <text evidence="1">Homodimer.</text>
</comment>
<comment type="subcellular location">
    <subcellularLocation>
        <location evidence="1">Cytoplasm</location>
    </subcellularLocation>
</comment>
<comment type="similarity">
    <text evidence="1">Belongs to the isocitrate and isopropylmalate dehydrogenases family. LeuB type 1 subfamily.</text>
</comment>
<name>LEU3_PECAS</name>
<organism>
    <name type="scientific">Pectobacterium atrosepticum (strain SCRI 1043 / ATCC BAA-672)</name>
    <name type="common">Erwinia carotovora subsp. atroseptica</name>
    <dbReference type="NCBI Taxonomy" id="218491"/>
    <lineage>
        <taxon>Bacteria</taxon>
        <taxon>Pseudomonadati</taxon>
        <taxon>Pseudomonadota</taxon>
        <taxon>Gammaproteobacteria</taxon>
        <taxon>Enterobacterales</taxon>
        <taxon>Pectobacteriaceae</taxon>
        <taxon>Pectobacterium</taxon>
    </lineage>
</organism>